<proteinExistence type="inferred from homology"/>
<protein>
    <recommendedName>
        <fullName evidence="1">Recombination protein RecR</fullName>
    </recommendedName>
</protein>
<name>RECR_HELP2</name>
<accession>B6JME6</accession>
<organism>
    <name type="scientific">Helicobacter pylori (strain P12)</name>
    <dbReference type="NCBI Taxonomy" id="570508"/>
    <lineage>
        <taxon>Bacteria</taxon>
        <taxon>Pseudomonadati</taxon>
        <taxon>Campylobacterota</taxon>
        <taxon>Epsilonproteobacteria</taxon>
        <taxon>Campylobacterales</taxon>
        <taxon>Helicobacteraceae</taxon>
        <taxon>Helicobacter</taxon>
    </lineage>
</organism>
<evidence type="ECO:0000255" key="1">
    <source>
        <dbReference type="HAMAP-Rule" id="MF_00017"/>
    </source>
</evidence>
<sequence>MNTYKNSLNHFLNLVDCLEKIPNVGKKSAFKMAYHLGLENPYLALKITHALENALENLKTCSSCNALSESEVCEICSDESRQNSQLCMVLHPRDVFILEDLKDFLGRYYVLNSIEEVDFNALEKRLIEENIKEIIFAFPPTLANDSLMLYIEDKLQHFHLTFTKIAQGVPTGVNFENIDSVSLSRAFNSRIKA</sequence>
<feature type="chain" id="PRO_1000089734" description="Recombination protein RecR">
    <location>
        <begin position="1"/>
        <end position="193"/>
    </location>
</feature>
<feature type="domain" description="Toprim" evidence="1">
    <location>
        <begin position="84"/>
        <end position="170"/>
    </location>
</feature>
<feature type="zinc finger region" description="C4-type" evidence="1">
    <location>
        <begin position="61"/>
        <end position="76"/>
    </location>
</feature>
<gene>
    <name evidence="1" type="primary">recR</name>
    <name type="ordered locus">HPP12_0922</name>
</gene>
<dbReference type="EMBL" id="CP001217">
    <property type="protein sequence ID" value="ACJ08074.1"/>
    <property type="molecule type" value="Genomic_DNA"/>
</dbReference>
<dbReference type="SMR" id="B6JME6"/>
<dbReference type="KEGG" id="hpp:HPP12_0922"/>
<dbReference type="HOGENOM" id="CLU_060739_1_1_7"/>
<dbReference type="Proteomes" id="UP000008198">
    <property type="component" value="Chromosome"/>
</dbReference>
<dbReference type="GO" id="GO:0003677">
    <property type="term" value="F:DNA binding"/>
    <property type="evidence" value="ECO:0007669"/>
    <property type="project" value="UniProtKB-UniRule"/>
</dbReference>
<dbReference type="GO" id="GO:0008270">
    <property type="term" value="F:zinc ion binding"/>
    <property type="evidence" value="ECO:0007669"/>
    <property type="project" value="UniProtKB-KW"/>
</dbReference>
<dbReference type="GO" id="GO:0006310">
    <property type="term" value="P:DNA recombination"/>
    <property type="evidence" value="ECO:0007669"/>
    <property type="project" value="UniProtKB-UniRule"/>
</dbReference>
<dbReference type="GO" id="GO:0006281">
    <property type="term" value="P:DNA repair"/>
    <property type="evidence" value="ECO:0007669"/>
    <property type="project" value="UniProtKB-UniRule"/>
</dbReference>
<dbReference type="CDD" id="cd01025">
    <property type="entry name" value="TOPRIM_recR"/>
    <property type="match status" value="1"/>
</dbReference>
<dbReference type="Gene3D" id="3.30.60.80">
    <property type="match status" value="1"/>
</dbReference>
<dbReference type="Gene3D" id="3.40.1360.10">
    <property type="match status" value="1"/>
</dbReference>
<dbReference type="Gene3D" id="1.10.8.420">
    <property type="entry name" value="RecR Domain 1"/>
    <property type="match status" value="1"/>
</dbReference>
<dbReference type="HAMAP" id="MF_00017">
    <property type="entry name" value="RecR"/>
    <property type="match status" value="1"/>
</dbReference>
<dbReference type="InterPro" id="IPR000093">
    <property type="entry name" value="DNA_Rcmb_RecR"/>
</dbReference>
<dbReference type="InterPro" id="IPR023627">
    <property type="entry name" value="Rcmb_RecR"/>
</dbReference>
<dbReference type="InterPro" id="IPR015967">
    <property type="entry name" value="Rcmb_RecR_Znf"/>
</dbReference>
<dbReference type="InterPro" id="IPR006171">
    <property type="entry name" value="TOPRIM_dom"/>
</dbReference>
<dbReference type="InterPro" id="IPR034137">
    <property type="entry name" value="TOPRIM_RecR"/>
</dbReference>
<dbReference type="NCBIfam" id="TIGR00615">
    <property type="entry name" value="recR"/>
    <property type="match status" value="1"/>
</dbReference>
<dbReference type="PANTHER" id="PTHR30446">
    <property type="entry name" value="RECOMBINATION PROTEIN RECR"/>
    <property type="match status" value="1"/>
</dbReference>
<dbReference type="PANTHER" id="PTHR30446:SF0">
    <property type="entry name" value="RECOMBINATION PROTEIN RECR"/>
    <property type="match status" value="1"/>
</dbReference>
<dbReference type="Pfam" id="PF21176">
    <property type="entry name" value="RecR_HhH"/>
    <property type="match status" value="1"/>
</dbReference>
<dbReference type="Pfam" id="PF02132">
    <property type="entry name" value="RecR_ZnF"/>
    <property type="match status" value="1"/>
</dbReference>
<dbReference type="SUPFAM" id="SSF111304">
    <property type="entry name" value="Recombination protein RecR"/>
    <property type="match status" value="1"/>
</dbReference>
<dbReference type="PROSITE" id="PS01300">
    <property type="entry name" value="RECR"/>
    <property type="match status" value="1"/>
</dbReference>
<dbReference type="PROSITE" id="PS50880">
    <property type="entry name" value="TOPRIM"/>
    <property type="match status" value="1"/>
</dbReference>
<comment type="function">
    <text evidence="1">May play a role in DNA repair. It seems to be involved in an RecBC-independent recombinational process of DNA repair. It may act with RecF and RecO.</text>
</comment>
<comment type="similarity">
    <text evidence="1">Belongs to the RecR family.</text>
</comment>
<keyword id="KW-0227">DNA damage</keyword>
<keyword id="KW-0233">DNA recombination</keyword>
<keyword id="KW-0234">DNA repair</keyword>
<keyword id="KW-0479">Metal-binding</keyword>
<keyword id="KW-0862">Zinc</keyword>
<keyword id="KW-0863">Zinc-finger</keyword>
<reference key="1">
    <citation type="submission" date="2008-10" db="EMBL/GenBank/DDBJ databases">
        <title>The complete genome sequence of Helicobacter pylori strain P12.</title>
        <authorList>
            <person name="Fischer W."/>
            <person name="Windhager L."/>
            <person name="Karnholz A."/>
            <person name="Zeiller M."/>
            <person name="Zimmer R."/>
            <person name="Haas R."/>
        </authorList>
    </citation>
    <scope>NUCLEOTIDE SEQUENCE [LARGE SCALE GENOMIC DNA]</scope>
    <source>
        <strain>P12</strain>
    </source>
</reference>